<protein>
    <recommendedName>
        <fullName>Protein IMPACT</fullName>
    </recommendedName>
    <alternativeName>
        <fullName>Imprinted and ancient gene protein homolog</fullName>
    </alternativeName>
</protein>
<organism>
    <name type="scientific">Danio rerio</name>
    <name type="common">Zebrafish</name>
    <name type="synonym">Brachydanio rerio</name>
    <dbReference type="NCBI Taxonomy" id="7955"/>
    <lineage>
        <taxon>Eukaryota</taxon>
        <taxon>Metazoa</taxon>
        <taxon>Chordata</taxon>
        <taxon>Craniata</taxon>
        <taxon>Vertebrata</taxon>
        <taxon>Euteleostomi</taxon>
        <taxon>Actinopterygii</taxon>
        <taxon>Neopterygii</taxon>
        <taxon>Teleostei</taxon>
        <taxon>Ostariophysi</taxon>
        <taxon>Cypriniformes</taxon>
        <taxon>Danionidae</taxon>
        <taxon>Danioninae</taxon>
        <taxon>Danio</taxon>
    </lineage>
</organism>
<proteinExistence type="evidence at transcript level"/>
<keyword id="KW-0963">Cytoplasm</keyword>
<keyword id="KW-0221">Differentiation</keyword>
<keyword id="KW-0524">Neurogenesis</keyword>
<keyword id="KW-1185">Reference proteome</keyword>
<keyword id="KW-0678">Repressor</keyword>
<keyword id="KW-0346">Stress response</keyword>
<keyword id="KW-0810">Translation regulation</keyword>
<accession>Q642J4</accession>
<sequence length="317" mass="35901">MDKLEDHDDNNLQSQIEEIEALSSIYGEEWCVIDEAARVFCIRISETQQPKWTVCLQIILPPDYPSSAPPIYQINAAWLRGQDRMTLSNSLEEIYVENAGESILYLWVEKIREFLTEKSQHSDGPDTCKTVMTEEGGHDCDEDDLPDISVLKLSSQSEQIFSPASDDEELPLIKHGESITDRRSTFQPHLSAVENPKQVQRVLNKLYENKKIASATHNIYAYRIYCQEKNSVLQDCEDDGETAAGGRLLHLLQILDVRNVLVVVSRWYGGILLGPDRFKHINNCARTILIQEGYADSTEETSKAGGKSKKPKSKKTK</sequence>
<name>IMPCT_DANRE</name>
<feature type="chain" id="PRO_0000330854" description="Protein IMPACT">
    <location>
        <begin position="1"/>
        <end position="317"/>
    </location>
</feature>
<feature type="domain" description="RWD" evidence="2">
    <location>
        <begin position="17"/>
        <end position="118"/>
    </location>
</feature>
<feature type="region of interest" description="Disordered" evidence="3">
    <location>
        <begin position="296"/>
        <end position="317"/>
    </location>
</feature>
<feature type="compositionally biased region" description="Basic residues" evidence="3">
    <location>
        <begin position="306"/>
        <end position="317"/>
    </location>
</feature>
<gene>
    <name type="primary">impact</name>
    <name type="ORF">zgc:103672</name>
</gene>
<reference key="1">
    <citation type="submission" date="2004-09" db="EMBL/GenBank/DDBJ databases">
        <authorList>
            <consortium name="NIH - Zebrafish Gene Collection (ZGC) project"/>
        </authorList>
    </citation>
    <scope>NUCLEOTIDE SEQUENCE [LARGE SCALE MRNA]</scope>
    <source>
        <tissue>Larva</tissue>
        <tissue>Olfactory epithelium</tissue>
    </source>
</reference>
<dbReference type="EMBL" id="BC081507">
    <property type="protein sequence ID" value="AAH81507.1"/>
    <property type="molecule type" value="mRNA"/>
</dbReference>
<dbReference type="EMBL" id="BC152160">
    <property type="protein sequence ID" value="AAI52161.1"/>
    <property type="molecule type" value="mRNA"/>
</dbReference>
<dbReference type="RefSeq" id="NP_001005595.1">
    <property type="nucleotide sequence ID" value="NM_001005595.1"/>
</dbReference>
<dbReference type="RefSeq" id="XP_017208603.1">
    <property type="nucleotide sequence ID" value="XM_017353114.1"/>
</dbReference>
<dbReference type="RefSeq" id="XP_017208604.1">
    <property type="nucleotide sequence ID" value="XM_017353115.3"/>
</dbReference>
<dbReference type="RefSeq" id="XP_017208605.1">
    <property type="nucleotide sequence ID" value="XM_017353116.2"/>
</dbReference>
<dbReference type="RefSeq" id="XP_017208606.1">
    <property type="nucleotide sequence ID" value="XM_017353117.3"/>
</dbReference>
<dbReference type="RefSeq" id="XP_017208607.1">
    <property type="nucleotide sequence ID" value="XM_017353118.2"/>
</dbReference>
<dbReference type="SMR" id="Q642J4"/>
<dbReference type="FunCoup" id="Q642J4">
    <property type="interactions" value="393"/>
</dbReference>
<dbReference type="STRING" id="7955.ENSDARP00000151051"/>
<dbReference type="PaxDb" id="7955-ENSDARP00000063544"/>
<dbReference type="Ensembl" id="ENSDART00000063545">
    <property type="protein sequence ID" value="ENSDARP00000063544"/>
    <property type="gene ID" value="ENSDARG00000043288"/>
</dbReference>
<dbReference type="Ensembl" id="ENSDART00000185354">
    <property type="protein sequence ID" value="ENSDARP00000151051"/>
    <property type="gene ID" value="ENSDARG00000043288"/>
</dbReference>
<dbReference type="GeneID" id="449553"/>
<dbReference type="KEGG" id="dre:449553"/>
<dbReference type="AGR" id="ZFIN:ZDB-GENE-040927-10"/>
<dbReference type="CTD" id="55364"/>
<dbReference type="ZFIN" id="ZDB-GENE-040927-10">
    <property type="gene designation" value="impact"/>
</dbReference>
<dbReference type="eggNOG" id="KOG3299">
    <property type="taxonomic scope" value="Eukaryota"/>
</dbReference>
<dbReference type="HOGENOM" id="CLU_045276_1_0_1"/>
<dbReference type="InParanoid" id="Q642J4"/>
<dbReference type="OMA" id="FYEISAP"/>
<dbReference type="OrthoDB" id="69641at2759"/>
<dbReference type="PhylomeDB" id="Q642J4"/>
<dbReference type="PRO" id="PR:Q642J4"/>
<dbReference type="Proteomes" id="UP000000437">
    <property type="component" value="Chromosome 22"/>
</dbReference>
<dbReference type="Bgee" id="ENSDARG00000043288">
    <property type="expression patterns" value="Expressed in mature ovarian follicle and 21 other cell types or tissues"/>
</dbReference>
<dbReference type="ExpressionAtlas" id="Q642J4">
    <property type="expression patterns" value="baseline"/>
</dbReference>
<dbReference type="GO" id="GO:0005737">
    <property type="term" value="C:cytoplasm"/>
    <property type="evidence" value="ECO:0000250"/>
    <property type="project" value="UniProtKB"/>
</dbReference>
<dbReference type="GO" id="GO:0140311">
    <property type="term" value="F:protein sequestering activity"/>
    <property type="evidence" value="ECO:0000250"/>
    <property type="project" value="UniProtKB"/>
</dbReference>
<dbReference type="GO" id="GO:0034198">
    <property type="term" value="P:cellular response to amino acid starvation"/>
    <property type="evidence" value="ECO:0000250"/>
    <property type="project" value="UniProtKB"/>
</dbReference>
<dbReference type="GO" id="GO:0140469">
    <property type="term" value="P:GCN2-mediated signaling"/>
    <property type="evidence" value="ECO:0000250"/>
    <property type="project" value="UniProtKB"/>
</dbReference>
<dbReference type="GO" id="GO:0035556">
    <property type="term" value="P:intracellular signal transduction"/>
    <property type="evidence" value="ECO:0000250"/>
    <property type="project" value="UniProtKB"/>
</dbReference>
<dbReference type="GO" id="GO:0000122">
    <property type="term" value="P:negative regulation of transcription by RNA polymerase II"/>
    <property type="evidence" value="ECO:0000250"/>
    <property type="project" value="UniProtKB"/>
</dbReference>
<dbReference type="GO" id="GO:1990138">
    <property type="term" value="P:neuron projection extension"/>
    <property type="evidence" value="ECO:0000250"/>
    <property type="project" value="UniProtKB"/>
</dbReference>
<dbReference type="GO" id="GO:0045666">
    <property type="term" value="P:positive regulation of neuron differentiation"/>
    <property type="evidence" value="ECO:0000250"/>
    <property type="project" value="UniProtKB"/>
</dbReference>
<dbReference type="GO" id="GO:1990611">
    <property type="term" value="P:regulation of cytoplasmic translational initiation in response to stress"/>
    <property type="evidence" value="ECO:0000250"/>
    <property type="project" value="UniProtKB"/>
</dbReference>
<dbReference type="GO" id="GO:0006446">
    <property type="term" value="P:regulation of translational initiation"/>
    <property type="evidence" value="ECO:0000318"/>
    <property type="project" value="GO_Central"/>
</dbReference>
<dbReference type="CDD" id="cd23821">
    <property type="entry name" value="RWD_IMPACT"/>
    <property type="match status" value="1"/>
</dbReference>
<dbReference type="FunFam" id="3.10.110.10:FF:000066">
    <property type="entry name" value="IMPACT isoform 1"/>
    <property type="match status" value="1"/>
</dbReference>
<dbReference type="FunFam" id="3.30.230.30:FF:000001">
    <property type="entry name" value="IMPACT isoform 1"/>
    <property type="match status" value="1"/>
</dbReference>
<dbReference type="Gene3D" id="3.30.230.30">
    <property type="entry name" value="Impact, N-terminal domain"/>
    <property type="match status" value="1"/>
</dbReference>
<dbReference type="Gene3D" id="3.10.110.10">
    <property type="entry name" value="Ubiquitin Conjugating Enzyme"/>
    <property type="match status" value="1"/>
</dbReference>
<dbReference type="InterPro" id="IPR023582">
    <property type="entry name" value="Impact"/>
</dbReference>
<dbReference type="InterPro" id="IPR001498">
    <property type="entry name" value="Impact_N"/>
</dbReference>
<dbReference type="InterPro" id="IPR036956">
    <property type="entry name" value="Impact_N_sf"/>
</dbReference>
<dbReference type="InterPro" id="IPR020568">
    <property type="entry name" value="Ribosomal_Su5_D2-typ_SF"/>
</dbReference>
<dbReference type="InterPro" id="IPR006575">
    <property type="entry name" value="RWD_dom"/>
</dbReference>
<dbReference type="InterPro" id="IPR016135">
    <property type="entry name" value="UBQ-conjugating_enzyme/RWD"/>
</dbReference>
<dbReference type="InterPro" id="IPR020569">
    <property type="entry name" value="UPF0029_Impact_CS"/>
</dbReference>
<dbReference type="PANTHER" id="PTHR16301">
    <property type="entry name" value="IMPACT-RELATED"/>
    <property type="match status" value="1"/>
</dbReference>
<dbReference type="PANTHER" id="PTHR16301:SF25">
    <property type="entry name" value="PROTEIN IMPACT"/>
    <property type="match status" value="1"/>
</dbReference>
<dbReference type="Pfam" id="PF05773">
    <property type="entry name" value="RWD"/>
    <property type="match status" value="1"/>
</dbReference>
<dbReference type="Pfam" id="PF01205">
    <property type="entry name" value="UPF0029"/>
    <property type="match status" value="1"/>
</dbReference>
<dbReference type="SMART" id="SM00591">
    <property type="entry name" value="RWD"/>
    <property type="match status" value="1"/>
</dbReference>
<dbReference type="SUPFAM" id="SSF54211">
    <property type="entry name" value="Ribosomal protein S5 domain 2-like"/>
    <property type="match status" value="1"/>
</dbReference>
<dbReference type="SUPFAM" id="SSF54495">
    <property type="entry name" value="UBC-like"/>
    <property type="match status" value="1"/>
</dbReference>
<dbReference type="PROSITE" id="PS50908">
    <property type="entry name" value="RWD"/>
    <property type="match status" value="1"/>
</dbReference>
<dbReference type="PROSITE" id="PS00910">
    <property type="entry name" value="UPF0029"/>
    <property type="match status" value="1"/>
</dbReference>
<evidence type="ECO:0000250" key="1">
    <source>
        <dbReference type="UniProtKB" id="O55091"/>
    </source>
</evidence>
<evidence type="ECO:0000255" key="2">
    <source>
        <dbReference type="PROSITE-ProRule" id="PRU00179"/>
    </source>
</evidence>
<evidence type="ECO:0000256" key="3">
    <source>
        <dbReference type="SAM" id="MobiDB-lite"/>
    </source>
</evidence>
<evidence type="ECO:0000305" key="4"/>
<comment type="function">
    <text evidence="1">Translational regulator that ensures constant high levels of translation upon a variety of stress conditions, such as amino acid starvation, UV-C irradiation, proteasome inhibitor treatment and glucose deprivation. Plays a role as a negative regulator of the EIF2AK4/GCN2 kinase activity; impairs GCN1-mediated EIF2AK4/GCN2 activation, and hence EIF2AK4/GCN2-mediated eIF-2-alpha phosphorylation and subsequent down-regulation of protein synthesis. Plays a role in differentiation of neuronal cells by stimulating neurite outgrowth.</text>
</comment>
<comment type="subunit">
    <text evidence="1">Interacts with GCN1; prevents the interaction of GCN1 with EIF2AK4/GCN2 and inhibits EIF2AK4/GCN2 kinase activity. Interaction with RPL39; this interaction occurs in a GCN1-independent manner. Associates with ribosomes; this interaction occurs in a GCN1-independent manner. Associates with actin; this interaction occurs in a GCN1-independent manner.</text>
</comment>
<comment type="subcellular location">
    <subcellularLocation>
        <location evidence="1">Cytoplasm</location>
    </subcellularLocation>
</comment>
<comment type="similarity">
    <text evidence="4">Belongs to the IMPACT family.</text>
</comment>